<proteinExistence type="inferred from homology"/>
<gene>
    <name evidence="1" type="primary">rhaT</name>
    <name type="ordered locus">YPTS_0413</name>
</gene>
<protein>
    <recommendedName>
        <fullName evidence="1">L-rhamnose-proton symporter</fullName>
    </recommendedName>
    <alternativeName>
        <fullName evidence="1">L-rhamnose-H(+) transport protein</fullName>
    </alternativeName>
</protein>
<name>RHAT_YERPB</name>
<accession>B2K1W7</accession>
<comment type="function">
    <text evidence="1">Uptake of L-rhamnose across the cytoplasmic membrane with the concomitant transport of protons into the cell (symport system).</text>
</comment>
<comment type="catalytic activity">
    <reaction evidence="1">
        <text>L-rhamnopyranose(in) + H(+)(in) = L-rhamnopyranose(out) + H(+)(out)</text>
        <dbReference type="Rhea" id="RHEA:29947"/>
        <dbReference type="ChEBI" id="CHEBI:15378"/>
        <dbReference type="ChEBI" id="CHEBI:62346"/>
    </reaction>
    <physiologicalReaction direction="right-to-left" evidence="1">
        <dbReference type="Rhea" id="RHEA:29949"/>
    </physiologicalReaction>
</comment>
<comment type="subcellular location">
    <subcellularLocation>
        <location evidence="1">Cell inner membrane</location>
        <topology evidence="1">Multi-pass membrane protein</topology>
    </subcellularLocation>
</comment>
<comment type="similarity">
    <text evidence="1">Belongs to the L-rhamnose transporter (TC 2.A.7.6) family.</text>
</comment>
<feature type="chain" id="PRO_1000146503" description="L-rhamnose-proton symporter">
    <location>
        <begin position="1"/>
        <end position="344"/>
    </location>
</feature>
<feature type="transmembrane region" description="Helical" evidence="1">
    <location>
        <begin position="4"/>
        <end position="24"/>
    </location>
</feature>
<feature type="transmembrane region" description="Helical" evidence="1">
    <location>
        <begin position="38"/>
        <end position="58"/>
    </location>
</feature>
<feature type="transmembrane region" description="Helical" evidence="1">
    <location>
        <begin position="68"/>
        <end position="88"/>
    </location>
</feature>
<feature type="transmembrane region" description="Helical" evidence="1">
    <location>
        <begin position="101"/>
        <end position="121"/>
    </location>
</feature>
<feature type="transmembrane region" description="Helical" evidence="1">
    <location>
        <begin position="137"/>
        <end position="157"/>
    </location>
</feature>
<feature type="transmembrane region" description="Helical" evidence="1">
    <location>
        <begin position="175"/>
        <end position="195"/>
    </location>
</feature>
<feature type="transmembrane region" description="Helical" evidence="1">
    <location>
        <begin position="207"/>
        <end position="227"/>
    </location>
</feature>
<feature type="transmembrane region" description="Helical" evidence="1">
    <location>
        <begin position="259"/>
        <end position="279"/>
    </location>
</feature>
<feature type="transmembrane region" description="Helical" evidence="1">
    <location>
        <begin position="290"/>
        <end position="310"/>
    </location>
</feature>
<feature type="transmembrane region" description="Helical" evidence="1">
    <location>
        <begin position="321"/>
        <end position="341"/>
    </location>
</feature>
<dbReference type="EMBL" id="CP001048">
    <property type="protein sequence ID" value="ACC87402.1"/>
    <property type="molecule type" value="Genomic_DNA"/>
</dbReference>
<dbReference type="RefSeq" id="WP_002209111.1">
    <property type="nucleotide sequence ID" value="NZ_CP009780.1"/>
</dbReference>
<dbReference type="GeneID" id="57974271"/>
<dbReference type="KEGG" id="ypb:YPTS_0413"/>
<dbReference type="PATRIC" id="fig|502801.10.peg.4091"/>
<dbReference type="GO" id="GO:0005886">
    <property type="term" value="C:plasma membrane"/>
    <property type="evidence" value="ECO:0007669"/>
    <property type="project" value="UniProtKB-SubCell"/>
</dbReference>
<dbReference type="GO" id="GO:0015153">
    <property type="term" value="F:rhamnose transmembrane transporter activity"/>
    <property type="evidence" value="ECO:0007669"/>
    <property type="project" value="UniProtKB-UniRule"/>
</dbReference>
<dbReference type="GO" id="GO:0015293">
    <property type="term" value="F:symporter activity"/>
    <property type="evidence" value="ECO:0007669"/>
    <property type="project" value="UniProtKB-KW"/>
</dbReference>
<dbReference type="HAMAP" id="MF_01532">
    <property type="entry name" value="RhaT"/>
    <property type="match status" value="1"/>
</dbReference>
<dbReference type="InterPro" id="IPR004673">
    <property type="entry name" value="L-rhamnose-proton_sym_RhaT"/>
</dbReference>
<dbReference type="NCBIfam" id="NF010021">
    <property type="entry name" value="PRK13499.1-1"/>
    <property type="match status" value="1"/>
</dbReference>
<dbReference type="NCBIfam" id="NF010023">
    <property type="entry name" value="PRK13499.1-3"/>
    <property type="match status" value="1"/>
</dbReference>
<dbReference type="NCBIfam" id="TIGR00776">
    <property type="entry name" value="RhaT"/>
    <property type="match status" value="1"/>
</dbReference>
<dbReference type="Pfam" id="PF06379">
    <property type="entry name" value="RhaT"/>
    <property type="match status" value="1"/>
</dbReference>
<evidence type="ECO:0000255" key="1">
    <source>
        <dbReference type="HAMAP-Rule" id="MF_01532"/>
    </source>
</evidence>
<sequence length="344" mass="37458">MNNAIILGIIWHLVGAASAACFYAPFKQVKKWSWETMWSIGGLVSWLILPWTVSYLLLPDFWQYYGSFSIATLLPVFLFGAMWGIGNINYGLTMRYLGMSMGIGIAIGITLIIGTLMTPILQGRFDVLLGTPGGRMTLLGVFVALIGVAIVSYAGLLKERAMGIQAEEFNLKKGLILAVMCGIFSAGMSFAMDAAKPMHEAASALGINSLYVALPSYVIIMGGGAIINLSYCFIRLATLKNLSVKADFSVAKPLLITNILFSALAGLMWYLQFFFYAWGHAKIPQQYDYMSWMLHMSFYVLCGGIVGLLLKEWKCSTKKPVAVLCIGCLVIILAANIVGLGMAA</sequence>
<keyword id="KW-0997">Cell inner membrane</keyword>
<keyword id="KW-1003">Cell membrane</keyword>
<keyword id="KW-0472">Membrane</keyword>
<keyword id="KW-0762">Sugar transport</keyword>
<keyword id="KW-0769">Symport</keyword>
<keyword id="KW-0812">Transmembrane</keyword>
<keyword id="KW-1133">Transmembrane helix</keyword>
<keyword id="KW-0813">Transport</keyword>
<organism>
    <name type="scientific">Yersinia pseudotuberculosis serotype IB (strain PB1/+)</name>
    <dbReference type="NCBI Taxonomy" id="502801"/>
    <lineage>
        <taxon>Bacteria</taxon>
        <taxon>Pseudomonadati</taxon>
        <taxon>Pseudomonadota</taxon>
        <taxon>Gammaproteobacteria</taxon>
        <taxon>Enterobacterales</taxon>
        <taxon>Yersiniaceae</taxon>
        <taxon>Yersinia</taxon>
    </lineage>
</organism>
<reference key="1">
    <citation type="submission" date="2008-04" db="EMBL/GenBank/DDBJ databases">
        <title>Complete sequence of Yersinia pseudotuberculosis PB1/+.</title>
        <authorList>
            <person name="Copeland A."/>
            <person name="Lucas S."/>
            <person name="Lapidus A."/>
            <person name="Glavina del Rio T."/>
            <person name="Dalin E."/>
            <person name="Tice H."/>
            <person name="Bruce D."/>
            <person name="Goodwin L."/>
            <person name="Pitluck S."/>
            <person name="Munk A.C."/>
            <person name="Brettin T."/>
            <person name="Detter J.C."/>
            <person name="Han C."/>
            <person name="Tapia R."/>
            <person name="Schmutz J."/>
            <person name="Larimer F."/>
            <person name="Land M."/>
            <person name="Hauser L."/>
            <person name="Challacombe J.F."/>
            <person name="Green L."/>
            <person name="Lindler L.E."/>
            <person name="Nikolich M.P."/>
            <person name="Richardson P."/>
        </authorList>
    </citation>
    <scope>NUCLEOTIDE SEQUENCE [LARGE SCALE GENOMIC DNA]</scope>
    <source>
        <strain>PB1/+</strain>
    </source>
</reference>